<organism>
    <name type="scientific">Pectobacterium atrosepticum (strain SCRI 1043 / ATCC BAA-672)</name>
    <name type="common">Erwinia carotovora subsp. atroseptica</name>
    <dbReference type="NCBI Taxonomy" id="218491"/>
    <lineage>
        <taxon>Bacteria</taxon>
        <taxon>Pseudomonadati</taxon>
        <taxon>Pseudomonadota</taxon>
        <taxon>Gammaproteobacteria</taxon>
        <taxon>Enterobacterales</taxon>
        <taxon>Pectobacteriaceae</taxon>
        <taxon>Pectobacterium</taxon>
    </lineage>
</organism>
<comment type="function">
    <text evidence="1">Catalyzes the conversion of dethiobiotin (DTB) to biotin by the insertion of a sulfur atom into dethiobiotin via a radical-based mechanism.</text>
</comment>
<comment type="catalytic activity">
    <reaction evidence="1">
        <text>(4R,5S)-dethiobiotin + (sulfur carrier)-SH + 2 reduced [2Fe-2S]-[ferredoxin] + 2 S-adenosyl-L-methionine = (sulfur carrier)-H + biotin + 2 5'-deoxyadenosine + 2 L-methionine + 2 oxidized [2Fe-2S]-[ferredoxin]</text>
        <dbReference type="Rhea" id="RHEA:22060"/>
        <dbReference type="Rhea" id="RHEA-COMP:10000"/>
        <dbReference type="Rhea" id="RHEA-COMP:10001"/>
        <dbReference type="Rhea" id="RHEA-COMP:14737"/>
        <dbReference type="Rhea" id="RHEA-COMP:14739"/>
        <dbReference type="ChEBI" id="CHEBI:17319"/>
        <dbReference type="ChEBI" id="CHEBI:29917"/>
        <dbReference type="ChEBI" id="CHEBI:33737"/>
        <dbReference type="ChEBI" id="CHEBI:33738"/>
        <dbReference type="ChEBI" id="CHEBI:57586"/>
        <dbReference type="ChEBI" id="CHEBI:57844"/>
        <dbReference type="ChEBI" id="CHEBI:59789"/>
        <dbReference type="ChEBI" id="CHEBI:64428"/>
        <dbReference type="ChEBI" id="CHEBI:149473"/>
        <dbReference type="EC" id="2.8.1.6"/>
    </reaction>
</comment>
<comment type="cofactor">
    <cofactor evidence="1">
        <name>[4Fe-4S] cluster</name>
        <dbReference type="ChEBI" id="CHEBI:49883"/>
    </cofactor>
    <text evidence="1">Binds 1 [4Fe-4S] cluster. The cluster is coordinated with 3 cysteines and an exchangeable S-adenosyl-L-methionine.</text>
</comment>
<comment type="cofactor">
    <cofactor evidence="1">
        <name>[2Fe-2S] cluster</name>
        <dbReference type="ChEBI" id="CHEBI:190135"/>
    </cofactor>
    <text evidence="1">Binds 1 [2Fe-2S] cluster. The cluster is coordinated with 3 cysteines and 1 arginine.</text>
</comment>
<comment type="pathway">
    <text evidence="1">Cofactor biosynthesis; biotin biosynthesis; biotin from 7,8-diaminononanoate: step 2/2.</text>
</comment>
<comment type="subunit">
    <text evidence="1">Homodimer.</text>
</comment>
<comment type="similarity">
    <text evidence="1">Belongs to the radical SAM superfamily. Biotin synthase family.</text>
</comment>
<keyword id="KW-0001">2Fe-2S</keyword>
<keyword id="KW-0004">4Fe-4S</keyword>
<keyword id="KW-0093">Biotin biosynthesis</keyword>
<keyword id="KW-0408">Iron</keyword>
<keyword id="KW-0411">Iron-sulfur</keyword>
<keyword id="KW-0479">Metal-binding</keyword>
<keyword id="KW-1185">Reference proteome</keyword>
<keyword id="KW-0949">S-adenosyl-L-methionine</keyword>
<keyword id="KW-0808">Transferase</keyword>
<feature type="chain" id="PRO_0000381380" description="Biotin synthase">
    <location>
        <begin position="1"/>
        <end position="345"/>
    </location>
</feature>
<feature type="domain" description="Radical SAM core" evidence="2">
    <location>
        <begin position="38"/>
        <end position="256"/>
    </location>
</feature>
<feature type="binding site" evidence="1">
    <location>
        <position position="53"/>
    </location>
    <ligand>
        <name>[4Fe-4S] cluster</name>
        <dbReference type="ChEBI" id="CHEBI:49883"/>
        <note>4Fe-4S-S-AdoMet</note>
    </ligand>
</feature>
<feature type="binding site" evidence="1">
    <location>
        <position position="57"/>
    </location>
    <ligand>
        <name>[4Fe-4S] cluster</name>
        <dbReference type="ChEBI" id="CHEBI:49883"/>
        <note>4Fe-4S-S-AdoMet</note>
    </ligand>
</feature>
<feature type="binding site" evidence="1">
    <location>
        <position position="60"/>
    </location>
    <ligand>
        <name>[4Fe-4S] cluster</name>
        <dbReference type="ChEBI" id="CHEBI:49883"/>
        <note>4Fe-4S-S-AdoMet</note>
    </ligand>
</feature>
<feature type="binding site" evidence="1">
    <location>
        <position position="97"/>
    </location>
    <ligand>
        <name>[2Fe-2S] cluster</name>
        <dbReference type="ChEBI" id="CHEBI:190135"/>
    </ligand>
</feature>
<feature type="binding site" evidence="1">
    <location>
        <position position="128"/>
    </location>
    <ligand>
        <name>[2Fe-2S] cluster</name>
        <dbReference type="ChEBI" id="CHEBI:190135"/>
    </ligand>
</feature>
<feature type="binding site" evidence="1">
    <location>
        <position position="188"/>
    </location>
    <ligand>
        <name>[2Fe-2S] cluster</name>
        <dbReference type="ChEBI" id="CHEBI:190135"/>
    </ligand>
</feature>
<feature type="binding site" evidence="1">
    <location>
        <position position="260"/>
    </location>
    <ligand>
        <name>[2Fe-2S] cluster</name>
        <dbReference type="ChEBI" id="CHEBI:190135"/>
    </ligand>
</feature>
<accession>Q6D3B9</accession>
<gene>
    <name evidence="1" type="primary">bioB</name>
    <name type="ordered locus">ECA2825</name>
</gene>
<evidence type="ECO:0000255" key="1">
    <source>
        <dbReference type="HAMAP-Rule" id="MF_01694"/>
    </source>
</evidence>
<evidence type="ECO:0000255" key="2">
    <source>
        <dbReference type="PROSITE-ProRule" id="PRU01266"/>
    </source>
</evidence>
<protein>
    <recommendedName>
        <fullName evidence="1">Biotin synthase</fullName>
        <ecNumber evidence="1">2.8.1.6</ecNumber>
    </recommendedName>
</protein>
<sequence>MADRIYWTLEQAQDLFNKPFLELMFEAQQIHRQHFDPRQVQVSTLLSIKTGSCPEDCKYCPQSSRYRTGIDTERLMQVEQVLDSARQAKAAGSTRFCMGAAWKNPHERDMPYLEQMVQGVKAMGMETCMTLGMLHHDQAERLASAGLDFYNHNLDTSPEFYGSIITTRTYQERLDTLDKVRGAGIKVCSGGIVGLGETVRDRAGLLVQLANLPTPPESVPINMLVKVKGTPLADNEDVDPFDFIRTIAVARIMMPASYVRLSAGREQMSEQTQAMCFMAGANSIFYGCKLLTTPNPKEDKDLALFLKLGLNPQQTGTEFGDNQQQQRLAEQLINADSEQFYNAAV</sequence>
<proteinExistence type="inferred from homology"/>
<reference key="1">
    <citation type="journal article" date="2004" name="Proc. Natl. Acad. Sci. U.S.A.">
        <title>Genome sequence of the enterobacterial phytopathogen Erwinia carotovora subsp. atroseptica and characterization of virulence factors.</title>
        <authorList>
            <person name="Bell K.S."/>
            <person name="Sebaihia M."/>
            <person name="Pritchard L."/>
            <person name="Holden M.T.G."/>
            <person name="Hyman L.J."/>
            <person name="Holeva M.C."/>
            <person name="Thomson N.R."/>
            <person name="Bentley S.D."/>
            <person name="Churcher L.J.C."/>
            <person name="Mungall K."/>
            <person name="Atkin R."/>
            <person name="Bason N."/>
            <person name="Brooks K."/>
            <person name="Chillingworth T."/>
            <person name="Clark K."/>
            <person name="Doggett J."/>
            <person name="Fraser A."/>
            <person name="Hance Z."/>
            <person name="Hauser H."/>
            <person name="Jagels K."/>
            <person name="Moule S."/>
            <person name="Norbertczak H."/>
            <person name="Ormond D."/>
            <person name="Price C."/>
            <person name="Quail M.A."/>
            <person name="Sanders M."/>
            <person name="Walker D."/>
            <person name="Whitehead S."/>
            <person name="Salmond G.P.C."/>
            <person name="Birch P.R.J."/>
            <person name="Parkhill J."/>
            <person name="Toth I.K."/>
        </authorList>
    </citation>
    <scope>NUCLEOTIDE SEQUENCE [LARGE SCALE GENOMIC DNA]</scope>
    <source>
        <strain>SCRI 1043 / ATCC BAA-672</strain>
    </source>
</reference>
<dbReference type="EC" id="2.8.1.6" evidence="1"/>
<dbReference type="EMBL" id="BX950851">
    <property type="protein sequence ID" value="CAG75725.1"/>
    <property type="molecule type" value="Genomic_DNA"/>
</dbReference>
<dbReference type="RefSeq" id="WP_011094359.1">
    <property type="nucleotide sequence ID" value="NC_004547.2"/>
</dbReference>
<dbReference type="SMR" id="Q6D3B9"/>
<dbReference type="STRING" id="218491.ECA2825"/>
<dbReference type="GeneID" id="57208486"/>
<dbReference type="KEGG" id="eca:ECA2825"/>
<dbReference type="PATRIC" id="fig|218491.5.peg.2866"/>
<dbReference type="eggNOG" id="COG0502">
    <property type="taxonomic scope" value="Bacteria"/>
</dbReference>
<dbReference type="HOGENOM" id="CLU_033172_1_2_6"/>
<dbReference type="OrthoDB" id="9786826at2"/>
<dbReference type="UniPathway" id="UPA00078">
    <property type="reaction ID" value="UER00162"/>
</dbReference>
<dbReference type="Proteomes" id="UP000007966">
    <property type="component" value="Chromosome"/>
</dbReference>
<dbReference type="GO" id="GO:0051537">
    <property type="term" value="F:2 iron, 2 sulfur cluster binding"/>
    <property type="evidence" value="ECO:0007669"/>
    <property type="project" value="UniProtKB-KW"/>
</dbReference>
<dbReference type="GO" id="GO:0051539">
    <property type="term" value="F:4 iron, 4 sulfur cluster binding"/>
    <property type="evidence" value="ECO:0007669"/>
    <property type="project" value="UniProtKB-KW"/>
</dbReference>
<dbReference type="GO" id="GO:0004076">
    <property type="term" value="F:biotin synthase activity"/>
    <property type="evidence" value="ECO:0007669"/>
    <property type="project" value="UniProtKB-UniRule"/>
</dbReference>
<dbReference type="GO" id="GO:0005506">
    <property type="term" value="F:iron ion binding"/>
    <property type="evidence" value="ECO:0007669"/>
    <property type="project" value="UniProtKB-UniRule"/>
</dbReference>
<dbReference type="GO" id="GO:0009102">
    <property type="term" value="P:biotin biosynthetic process"/>
    <property type="evidence" value="ECO:0007669"/>
    <property type="project" value="UniProtKB-UniRule"/>
</dbReference>
<dbReference type="CDD" id="cd01335">
    <property type="entry name" value="Radical_SAM"/>
    <property type="match status" value="1"/>
</dbReference>
<dbReference type="FunFam" id="3.20.20.70:FF:000011">
    <property type="entry name" value="Biotin synthase"/>
    <property type="match status" value="1"/>
</dbReference>
<dbReference type="Gene3D" id="3.20.20.70">
    <property type="entry name" value="Aldolase class I"/>
    <property type="match status" value="1"/>
</dbReference>
<dbReference type="HAMAP" id="MF_01694">
    <property type="entry name" value="BioB"/>
    <property type="match status" value="1"/>
</dbReference>
<dbReference type="InterPro" id="IPR013785">
    <property type="entry name" value="Aldolase_TIM"/>
</dbReference>
<dbReference type="InterPro" id="IPR010722">
    <property type="entry name" value="BATS_dom"/>
</dbReference>
<dbReference type="InterPro" id="IPR002684">
    <property type="entry name" value="Biotin_synth/BioAB"/>
</dbReference>
<dbReference type="InterPro" id="IPR024177">
    <property type="entry name" value="Biotin_synthase"/>
</dbReference>
<dbReference type="InterPro" id="IPR006638">
    <property type="entry name" value="Elp3/MiaA/NifB-like_rSAM"/>
</dbReference>
<dbReference type="InterPro" id="IPR007197">
    <property type="entry name" value="rSAM"/>
</dbReference>
<dbReference type="NCBIfam" id="TIGR00433">
    <property type="entry name" value="bioB"/>
    <property type="match status" value="1"/>
</dbReference>
<dbReference type="PANTHER" id="PTHR22976">
    <property type="entry name" value="BIOTIN SYNTHASE"/>
    <property type="match status" value="1"/>
</dbReference>
<dbReference type="PANTHER" id="PTHR22976:SF2">
    <property type="entry name" value="BIOTIN SYNTHASE, MITOCHONDRIAL"/>
    <property type="match status" value="1"/>
</dbReference>
<dbReference type="Pfam" id="PF06968">
    <property type="entry name" value="BATS"/>
    <property type="match status" value="1"/>
</dbReference>
<dbReference type="Pfam" id="PF04055">
    <property type="entry name" value="Radical_SAM"/>
    <property type="match status" value="1"/>
</dbReference>
<dbReference type="PIRSF" id="PIRSF001619">
    <property type="entry name" value="Biotin_synth"/>
    <property type="match status" value="1"/>
</dbReference>
<dbReference type="SFLD" id="SFLDF00272">
    <property type="entry name" value="biotin_synthase"/>
    <property type="match status" value="1"/>
</dbReference>
<dbReference type="SFLD" id="SFLDS00029">
    <property type="entry name" value="Radical_SAM"/>
    <property type="match status" value="1"/>
</dbReference>
<dbReference type="SMART" id="SM00876">
    <property type="entry name" value="BATS"/>
    <property type="match status" value="1"/>
</dbReference>
<dbReference type="SMART" id="SM00729">
    <property type="entry name" value="Elp3"/>
    <property type="match status" value="1"/>
</dbReference>
<dbReference type="SUPFAM" id="SSF102114">
    <property type="entry name" value="Radical SAM enzymes"/>
    <property type="match status" value="1"/>
</dbReference>
<dbReference type="PROSITE" id="PS51918">
    <property type="entry name" value="RADICAL_SAM"/>
    <property type="match status" value="1"/>
</dbReference>
<name>BIOB_PECAS</name>